<dbReference type="EC" id="2.4.1.21" evidence="1"/>
<dbReference type="EMBL" id="CP001322">
    <property type="protein sequence ID" value="ACL04618.1"/>
    <property type="molecule type" value="Genomic_DNA"/>
</dbReference>
<dbReference type="RefSeq" id="WP_015947687.1">
    <property type="nucleotide sequence ID" value="NC_011768.1"/>
</dbReference>
<dbReference type="SMR" id="B8FBH4"/>
<dbReference type="CAZy" id="GT5">
    <property type="family name" value="Glycosyltransferase Family 5"/>
</dbReference>
<dbReference type="KEGG" id="dal:Dalk_2928"/>
<dbReference type="eggNOG" id="COG0297">
    <property type="taxonomic scope" value="Bacteria"/>
</dbReference>
<dbReference type="HOGENOM" id="CLU_009583_18_5_7"/>
<dbReference type="UniPathway" id="UPA00164"/>
<dbReference type="Proteomes" id="UP000000739">
    <property type="component" value="Chromosome"/>
</dbReference>
<dbReference type="GO" id="GO:0009011">
    <property type="term" value="F:alpha-1,4-glucan glucosyltransferase (ADP-glucose donor) activity"/>
    <property type="evidence" value="ECO:0007669"/>
    <property type="project" value="UniProtKB-UniRule"/>
</dbReference>
<dbReference type="GO" id="GO:0004373">
    <property type="term" value="F:alpha-1,4-glucan glucosyltransferase (UDP-glucose donor) activity"/>
    <property type="evidence" value="ECO:0007669"/>
    <property type="project" value="InterPro"/>
</dbReference>
<dbReference type="GO" id="GO:0005978">
    <property type="term" value="P:glycogen biosynthetic process"/>
    <property type="evidence" value="ECO:0007669"/>
    <property type="project" value="UniProtKB-UniRule"/>
</dbReference>
<dbReference type="CDD" id="cd03791">
    <property type="entry name" value="GT5_Glycogen_synthase_DULL1-like"/>
    <property type="match status" value="1"/>
</dbReference>
<dbReference type="Gene3D" id="3.40.50.2000">
    <property type="entry name" value="Glycogen Phosphorylase B"/>
    <property type="match status" value="2"/>
</dbReference>
<dbReference type="HAMAP" id="MF_00484">
    <property type="entry name" value="Glycogen_synth"/>
    <property type="match status" value="1"/>
</dbReference>
<dbReference type="InterPro" id="IPR001296">
    <property type="entry name" value="Glyco_trans_1"/>
</dbReference>
<dbReference type="InterPro" id="IPR011835">
    <property type="entry name" value="GS/SS"/>
</dbReference>
<dbReference type="InterPro" id="IPR013534">
    <property type="entry name" value="Starch_synth_cat_dom"/>
</dbReference>
<dbReference type="NCBIfam" id="TIGR02095">
    <property type="entry name" value="glgA"/>
    <property type="match status" value="1"/>
</dbReference>
<dbReference type="NCBIfam" id="NF001899">
    <property type="entry name" value="PRK00654.1-2"/>
    <property type="match status" value="1"/>
</dbReference>
<dbReference type="PANTHER" id="PTHR45825:SF11">
    <property type="entry name" value="ALPHA AMYLASE DOMAIN-CONTAINING PROTEIN"/>
    <property type="match status" value="1"/>
</dbReference>
<dbReference type="PANTHER" id="PTHR45825">
    <property type="entry name" value="GRANULE-BOUND STARCH SYNTHASE 1, CHLOROPLASTIC/AMYLOPLASTIC"/>
    <property type="match status" value="1"/>
</dbReference>
<dbReference type="Pfam" id="PF08323">
    <property type="entry name" value="Glyco_transf_5"/>
    <property type="match status" value="1"/>
</dbReference>
<dbReference type="Pfam" id="PF00534">
    <property type="entry name" value="Glycos_transf_1"/>
    <property type="match status" value="1"/>
</dbReference>
<dbReference type="SUPFAM" id="SSF53756">
    <property type="entry name" value="UDP-Glycosyltransferase/glycogen phosphorylase"/>
    <property type="match status" value="1"/>
</dbReference>
<reference key="1">
    <citation type="journal article" date="2012" name="Environ. Microbiol.">
        <title>The genome sequence of Desulfatibacillum alkenivorans AK-01: a blueprint for anaerobic alkane oxidation.</title>
        <authorList>
            <person name="Callaghan A.V."/>
            <person name="Morris B.E."/>
            <person name="Pereira I.A."/>
            <person name="McInerney M.J."/>
            <person name="Austin R.N."/>
            <person name="Groves J.T."/>
            <person name="Kukor J.J."/>
            <person name="Suflita J.M."/>
            <person name="Young L.Y."/>
            <person name="Zylstra G.J."/>
            <person name="Wawrik B."/>
        </authorList>
    </citation>
    <scope>NUCLEOTIDE SEQUENCE [LARGE SCALE GENOMIC DNA]</scope>
    <source>
        <strain>AK-01</strain>
    </source>
</reference>
<comment type="function">
    <text evidence="1">Synthesizes alpha-1,4-glucan chains using ADP-glucose.</text>
</comment>
<comment type="catalytic activity">
    <reaction evidence="1">
        <text>[(1-&gt;4)-alpha-D-glucosyl](n) + ADP-alpha-D-glucose = [(1-&gt;4)-alpha-D-glucosyl](n+1) + ADP + H(+)</text>
        <dbReference type="Rhea" id="RHEA:18189"/>
        <dbReference type="Rhea" id="RHEA-COMP:9584"/>
        <dbReference type="Rhea" id="RHEA-COMP:9587"/>
        <dbReference type="ChEBI" id="CHEBI:15378"/>
        <dbReference type="ChEBI" id="CHEBI:15444"/>
        <dbReference type="ChEBI" id="CHEBI:57498"/>
        <dbReference type="ChEBI" id="CHEBI:456216"/>
        <dbReference type="EC" id="2.4.1.21"/>
    </reaction>
</comment>
<comment type="pathway">
    <text evidence="1">Glycan biosynthesis; glycogen biosynthesis.</text>
</comment>
<comment type="similarity">
    <text evidence="1">Belongs to the glycosyltransferase 1 family. Bacterial/plant glycogen synthase subfamily.</text>
</comment>
<keyword id="KW-0320">Glycogen biosynthesis</keyword>
<keyword id="KW-0328">Glycosyltransferase</keyword>
<keyword id="KW-1185">Reference proteome</keyword>
<keyword id="KW-0808">Transferase</keyword>
<accession>B8FBH4</accession>
<sequence length="483" mass="52582">MKVLIVSSELSPIAKEGGLGDAMAGLAPALDALGCEVKVAIPGYGHVLESCPGAELITENVRVSMGYFNMTADLRKVEPAPGVEAYMVCNESLFGRHGVYGDNDGLFMDNHKRYIFFSKSIPALCSASRYIPDVILANDWQTGLIPALMDQGHMPQTASVFVIHNIGYLGYVPPEDASMLGLSNTYLSYEGMEFYGQLSLLKAGIAYANKLVTVSPTYSREIQTTEQGAGLDGLMRKRSQDLAGILNGVDFQVWSPETDKHIPCNYSTADMAGKGKCKKALLDEMGMDSQLMNAPVAGMVTRLFSQKGIELVIGAVPEIVENGMGFILLGNGEESYVRDLRRLAQAYPGRFRFEEAFNEPLAHRIMAGADMLCVPSLYEPCGLTQMYALQYGTIPVARATGGLADTVRDIKAFAGKGNGFTFDAFSPGAFANAMDRAGRHYKNRKAWSALRTKAMASAGVFTWDMAAEQYYSIFERAVRARRL</sequence>
<protein>
    <recommendedName>
        <fullName evidence="1">Glycogen synthase</fullName>
        <ecNumber evidence="1">2.4.1.21</ecNumber>
    </recommendedName>
    <alternativeName>
        <fullName evidence="1">Starch [bacterial glycogen] synthase</fullName>
    </alternativeName>
</protein>
<name>GLGA_DESAL</name>
<gene>
    <name evidence="1" type="primary">glgA</name>
    <name type="ordered locus">Dalk_2928</name>
</gene>
<feature type="chain" id="PRO_1000126063" description="Glycogen synthase">
    <location>
        <begin position="1"/>
        <end position="483"/>
    </location>
</feature>
<feature type="binding site" evidence="1">
    <location>
        <position position="15"/>
    </location>
    <ligand>
        <name>ADP-alpha-D-glucose</name>
        <dbReference type="ChEBI" id="CHEBI:57498"/>
    </ligand>
</feature>
<proteinExistence type="inferred from homology"/>
<evidence type="ECO:0000255" key="1">
    <source>
        <dbReference type="HAMAP-Rule" id="MF_00484"/>
    </source>
</evidence>
<organism>
    <name type="scientific">Desulfatibacillum aliphaticivorans</name>
    <dbReference type="NCBI Taxonomy" id="218208"/>
    <lineage>
        <taxon>Bacteria</taxon>
        <taxon>Pseudomonadati</taxon>
        <taxon>Thermodesulfobacteriota</taxon>
        <taxon>Desulfobacteria</taxon>
        <taxon>Desulfobacterales</taxon>
        <taxon>Desulfatibacillaceae</taxon>
        <taxon>Desulfatibacillum</taxon>
    </lineage>
</organism>